<feature type="chain" id="PRO_0000215565" description="Dihydroflavonol 4-reductase">
    <location>
        <begin position="1"/>
        <end position="360"/>
    </location>
</feature>
<feature type="binding site" evidence="1">
    <location>
        <position position="61"/>
    </location>
    <ligand>
        <name>NADP(+)</name>
        <dbReference type="ChEBI" id="CHEBI:58349"/>
    </ligand>
</feature>
<feature type="binding site" evidence="1">
    <location>
        <position position="179"/>
    </location>
    <ligand>
        <name>NADP(+)</name>
        <dbReference type="ChEBI" id="CHEBI:58349"/>
    </ligand>
</feature>
<gene>
    <name type="primary">A</name>
</gene>
<proteinExistence type="evidence at transcript level"/>
<sequence>MVSSTINETLDGKHDINKVGQGETVCVTGASGFIGSWLIMRLLERGYTVRATVRDPDNTKKVQHLLDLPNAKTNLTLWKADLHEEGSFDAAVDGCTGVFHIATPMDFESKDPENEMIKPTINGMLDILKSCVKAKLRRVVFTSSGGTVNVEATQKPVYDETCWSALDFIRSVKMTGWMYFVSKILAEQAAWKYAAENNLEFISIIPPLVVGPFIMPSMPPSLITALSPITRTESHYTIIKQGQFVHLDDLCMSHIFLYENPKANGRYIASACAATIYDIAKMLREEYPEYNVPTKFKDYKEDMGQVQFSSKKLTDLGFEFKYGLKDMYTAAVESCRAKGLLPLSLEHHLCVFRVTLIFFK</sequence>
<accession>P51104</accession>
<comment type="function">
    <text evidence="2">Bifunctional enzyme involved in flavonoid metabolism.</text>
</comment>
<comment type="catalytic activity">
    <reaction evidence="2">
        <text>a (2R,3S,4S)-leucoanthocyanidin + NADP(+) = a (2R,3R)-dihydroflavonol + NADPH + H(+)</text>
        <dbReference type="Rhea" id="RHEA:54444"/>
        <dbReference type="ChEBI" id="CHEBI:15378"/>
        <dbReference type="ChEBI" id="CHEBI:57783"/>
        <dbReference type="ChEBI" id="CHEBI:58349"/>
        <dbReference type="ChEBI" id="CHEBI:138176"/>
        <dbReference type="ChEBI" id="CHEBI:138188"/>
        <dbReference type="EC" id="1.1.1.219"/>
    </reaction>
</comment>
<comment type="catalytic activity">
    <reaction evidence="2">
        <text>(2S)-flavan-4-ol + NADP(+) = (2S)-flavanone + NADPH + H(+)</text>
        <dbReference type="Rhea" id="RHEA:11228"/>
        <dbReference type="ChEBI" id="CHEBI:15378"/>
        <dbReference type="ChEBI" id="CHEBI:15605"/>
        <dbReference type="ChEBI" id="CHEBI:15606"/>
        <dbReference type="ChEBI" id="CHEBI:57783"/>
        <dbReference type="ChEBI" id="CHEBI:58349"/>
        <dbReference type="EC" id="1.1.1.234"/>
    </reaction>
</comment>
<comment type="pathway">
    <text>Pigment biosynthesis; anthocyanin biosynthesis.</text>
</comment>
<comment type="similarity">
    <text evidence="3">Belongs to the NAD(P)-dependent epimerase/dehydratase family. Dihydroflavonol-4-reductase subfamily.</text>
</comment>
<reference key="1">
    <citation type="submission" date="1995-11" db="EMBL/GenBank/DDBJ databases">
        <authorList>
            <person name="Min B."/>
            <person name="Sommer H."/>
            <person name="Forkmann G."/>
        </authorList>
    </citation>
    <scope>NUCLEOTIDE SEQUENCE [MRNA]</scope>
    <source>
        <strain>cv. Tanga</strain>
        <tissue>Petal</tissue>
    </source>
</reference>
<name>DFRA_DIACA</name>
<dbReference type="EC" id="1.1.1.219" evidence="2"/>
<dbReference type="EC" id="1.1.1.234" evidence="2"/>
<dbReference type="EMBL" id="Z67983">
    <property type="protein sequence ID" value="CAA91924.1"/>
    <property type="molecule type" value="mRNA"/>
</dbReference>
<dbReference type="PIR" id="T10716">
    <property type="entry name" value="T10716"/>
</dbReference>
<dbReference type="SMR" id="P51104"/>
<dbReference type="BRENDA" id="1.1.1.219">
    <property type="organism ID" value="1925"/>
</dbReference>
<dbReference type="UniPathway" id="UPA00009"/>
<dbReference type="GO" id="GO:0045552">
    <property type="term" value="F:dihydrokaempferol 4-reductase activity"/>
    <property type="evidence" value="ECO:0007669"/>
    <property type="project" value="UniProtKB-EC"/>
</dbReference>
<dbReference type="GO" id="GO:0047890">
    <property type="term" value="F:flavanone 4-reductase activity"/>
    <property type="evidence" value="ECO:0007669"/>
    <property type="project" value="UniProtKB-EC"/>
</dbReference>
<dbReference type="GO" id="GO:0009718">
    <property type="term" value="P:anthocyanin-containing compound biosynthetic process"/>
    <property type="evidence" value="ECO:0007669"/>
    <property type="project" value="UniProtKB-UniPathway"/>
</dbReference>
<dbReference type="CDD" id="cd08958">
    <property type="entry name" value="FR_SDR_e"/>
    <property type="match status" value="1"/>
</dbReference>
<dbReference type="FunFam" id="3.40.50.720:FF:000085">
    <property type="entry name" value="Dihydroflavonol reductase"/>
    <property type="match status" value="1"/>
</dbReference>
<dbReference type="Gene3D" id="3.40.50.720">
    <property type="entry name" value="NAD(P)-binding Rossmann-like Domain"/>
    <property type="match status" value="1"/>
</dbReference>
<dbReference type="InterPro" id="IPR001509">
    <property type="entry name" value="Epimerase_deHydtase"/>
</dbReference>
<dbReference type="InterPro" id="IPR036291">
    <property type="entry name" value="NAD(P)-bd_dom_sf"/>
</dbReference>
<dbReference type="InterPro" id="IPR050425">
    <property type="entry name" value="NAD(P)_dehydrat-like"/>
</dbReference>
<dbReference type="PANTHER" id="PTHR10366">
    <property type="entry name" value="NAD DEPENDENT EPIMERASE/DEHYDRATASE"/>
    <property type="match status" value="1"/>
</dbReference>
<dbReference type="PANTHER" id="PTHR10366:SF564">
    <property type="entry name" value="STEROL-4-ALPHA-CARBOXYLATE 3-DEHYDROGENASE, DECARBOXYLATING"/>
    <property type="match status" value="1"/>
</dbReference>
<dbReference type="Pfam" id="PF01370">
    <property type="entry name" value="Epimerase"/>
    <property type="match status" value="1"/>
</dbReference>
<dbReference type="SUPFAM" id="SSF51735">
    <property type="entry name" value="NAD(P)-binding Rossmann-fold domains"/>
    <property type="match status" value="1"/>
</dbReference>
<organism>
    <name type="scientific">Dianthus caryophyllus</name>
    <name type="common">Carnation</name>
    <name type="synonym">Clove pink</name>
    <dbReference type="NCBI Taxonomy" id="3570"/>
    <lineage>
        <taxon>Eukaryota</taxon>
        <taxon>Viridiplantae</taxon>
        <taxon>Streptophyta</taxon>
        <taxon>Embryophyta</taxon>
        <taxon>Tracheophyta</taxon>
        <taxon>Spermatophyta</taxon>
        <taxon>Magnoliopsida</taxon>
        <taxon>eudicotyledons</taxon>
        <taxon>Gunneridae</taxon>
        <taxon>Pentapetalae</taxon>
        <taxon>Caryophyllales</taxon>
        <taxon>Caryophyllaceae</taxon>
        <taxon>Caryophylleae</taxon>
        <taxon>Dianthus</taxon>
    </lineage>
</organism>
<protein>
    <recommendedName>
        <fullName>Dihydroflavonol 4-reductase</fullName>
        <shortName>DFR</shortName>
        <ecNumber evidence="2">1.1.1.219</ecNumber>
    </recommendedName>
    <alternativeName>
        <fullName>Dihydrokaempferol 4-reductase</fullName>
    </alternativeName>
    <alternativeName>
        <fullName>Flavanone 4-reductase</fullName>
        <shortName>FNR</shortName>
        <ecNumber evidence="2">1.1.1.234</ecNumber>
    </alternativeName>
</protein>
<keyword id="KW-0284">Flavonoid biosynthesis</keyword>
<keyword id="KW-0521">NADP</keyword>
<keyword id="KW-0560">Oxidoreductase</keyword>
<evidence type="ECO:0000250" key="1">
    <source>
        <dbReference type="UniProtKB" id="A0A059TC02"/>
    </source>
</evidence>
<evidence type="ECO:0000250" key="2">
    <source>
        <dbReference type="UniProtKB" id="Q9XES5"/>
    </source>
</evidence>
<evidence type="ECO:0000305" key="3"/>